<accession>Q0TAF8</accession>
<organism>
    <name type="scientific">Escherichia coli O6:K15:H31 (strain 536 / UPEC)</name>
    <dbReference type="NCBI Taxonomy" id="362663"/>
    <lineage>
        <taxon>Bacteria</taxon>
        <taxon>Pseudomonadati</taxon>
        <taxon>Pseudomonadota</taxon>
        <taxon>Gammaproteobacteria</taxon>
        <taxon>Enterobacterales</taxon>
        <taxon>Enterobacteriaceae</taxon>
        <taxon>Escherichia</taxon>
    </lineage>
</organism>
<protein>
    <recommendedName>
        <fullName evidence="1">HTH-type transcriptional activator RhaS</fullName>
    </recommendedName>
    <alternativeName>
        <fullName evidence="1">L-rhamnose operon regulatory protein RhaS</fullName>
    </alternativeName>
</protein>
<evidence type="ECO:0000255" key="1">
    <source>
        <dbReference type="HAMAP-Rule" id="MF_01534"/>
    </source>
</evidence>
<gene>
    <name evidence="1" type="primary">rhaS</name>
    <name type="ordered locus">ECP_4115</name>
</gene>
<name>RHAS_ECOL5</name>
<proteinExistence type="inferred from homology"/>
<dbReference type="EMBL" id="CP000247">
    <property type="protein sequence ID" value="ABG72071.1"/>
    <property type="molecule type" value="Genomic_DNA"/>
</dbReference>
<dbReference type="RefSeq" id="WP_000217156.1">
    <property type="nucleotide sequence ID" value="NC_008253.1"/>
</dbReference>
<dbReference type="SMR" id="Q0TAF8"/>
<dbReference type="KEGG" id="ecp:ECP_4115"/>
<dbReference type="HOGENOM" id="CLU_000445_88_5_6"/>
<dbReference type="Proteomes" id="UP000009182">
    <property type="component" value="Chromosome"/>
</dbReference>
<dbReference type="GO" id="GO:0005737">
    <property type="term" value="C:cytoplasm"/>
    <property type="evidence" value="ECO:0007669"/>
    <property type="project" value="UniProtKB-SubCell"/>
</dbReference>
<dbReference type="GO" id="GO:0003700">
    <property type="term" value="F:DNA-binding transcription factor activity"/>
    <property type="evidence" value="ECO:0007669"/>
    <property type="project" value="UniProtKB-UniRule"/>
</dbReference>
<dbReference type="GO" id="GO:0043565">
    <property type="term" value="F:sequence-specific DNA binding"/>
    <property type="evidence" value="ECO:0007669"/>
    <property type="project" value="InterPro"/>
</dbReference>
<dbReference type="GO" id="GO:0045893">
    <property type="term" value="P:positive regulation of DNA-templated transcription"/>
    <property type="evidence" value="ECO:0007669"/>
    <property type="project" value="UniProtKB-UniRule"/>
</dbReference>
<dbReference type="GO" id="GO:0019299">
    <property type="term" value="P:rhamnose metabolic process"/>
    <property type="evidence" value="ECO:0007669"/>
    <property type="project" value="UniProtKB-UniRule"/>
</dbReference>
<dbReference type="CDD" id="cd06977">
    <property type="entry name" value="cupin_RhaR_RhaS-like_N"/>
    <property type="match status" value="1"/>
</dbReference>
<dbReference type="FunFam" id="1.10.10.60:FF:000181">
    <property type="entry name" value="HTH-type transcriptional activator RhaS"/>
    <property type="match status" value="1"/>
</dbReference>
<dbReference type="FunFam" id="2.60.120.10:FF:000041">
    <property type="entry name" value="HTH-type transcriptional activator RhaS"/>
    <property type="match status" value="1"/>
</dbReference>
<dbReference type="Gene3D" id="1.10.10.60">
    <property type="entry name" value="Homeodomain-like"/>
    <property type="match status" value="1"/>
</dbReference>
<dbReference type="Gene3D" id="2.60.120.10">
    <property type="entry name" value="Jelly Rolls"/>
    <property type="match status" value="1"/>
</dbReference>
<dbReference type="HAMAP" id="MF_01534">
    <property type="entry name" value="HTH_type_RhaS"/>
    <property type="match status" value="1"/>
</dbReference>
<dbReference type="InterPro" id="IPR003313">
    <property type="entry name" value="AraC-bd"/>
</dbReference>
<dbReference type="InterPro" id="IPR050204">
    <property type="entry name" value="AraC_XylS_family_regulators"/>
</dbReference>
<dbReference type="InterPro" id="IPR009057">
    <property type="entry name" value="Homeodomain-like_sf"/>
</dbReference>
<dbReference type="InterPro" id="IPR037923">
    <property type="entry name" value="HTH-like"/>
</dbReference>
<dbReference type="InterPro" id="IPR018060">
    <property type="entry name" value="HTH_AraC"/>
</dbReference>
<dbReference type="InterPro" id="IPR018062">
    <property type="entry name" value="HTH_AraC-typ_CS"/>
</dbReference>
<dbReference type="InterPro" id="IPR047220">
    <property type="entry name" value="RhaR_RhaS-like_N"/>
</dbReference>
<dbReference type="InterPro" id="IPR014710">
    <property type="entry name" value="RmlC-like_jellyroll"/>
</dbReference>
<dbReference type="InterPro" id="IPR020449">
    <property type="entry name" value="Tscrpt_reg_AraC-type_HTH"/>
</dbReference>
<dbReference type="InterPro" id="IPR023609">
    <property type="entry name" value="Tscrpt_reg_HTH_RhaS"/>
</dbReference>
<dbReference type="NCBIfam" id="NF010028">
    <property type="entry name" value="PRK13503.1"/>
    <property type="match status" value="1"/>
</dbReference>
<dbReference type="PANTHER" id="PTHR46796:SF13">
    <property type="entry name" value="HTH-TYPE TRANSCRIPTIONAL ACTIVATOR RHAS"/>
    <property type="match status" value="1"/>
</dbReference>
<dbReference type="PANTHER" id="PTHR46796">
    <property type="entry name" value="HTH-TYPE TRANSCRIPTIONAL ACTIVATOR RHAS-RELATED"/>
    <property type="match status" value="1"/>
</dbReference>
<dbReference type="Pfam" id="PF02311">
    <property type="entry name" value="AraC_binding"/>
    <property type="match status" value="1"/>
</dbReference>
<dbReference type="Pfam" id="PF12833">
    <property type="entry name" value="HTH_18"/>
    <property type="match status" value="1"/>
</dbReference>
<dbReference type="PRINTS" id="PR00032">
    <property type="entry name" value="HTHARAC"/>
</dbReference>
<dbReference type="SMART" id="SM00342">
    <property type="entry name" value="HTH_ARAC"/>
    <property type="match status" value="1"/>
</dbReference>
<dbReference type="SUPFAM" id="SSF46689">
    <property type="entry name" value="Homeodomain-like"/>
    <property type="match status" value="2"/>
</dbReference>
<dbReference type="SUPFAM" id="SSF51215">
    <property type="entry name" value="Regulatory protein AraC"/>
    <property type="match status" value="1"/>
</dbReference>
<dbReference type="PROSITE" id="PS00041">
    <property type="entry name" value="HTH_ARAC_FAMILY_1"/>
    <property type="match status" value="1"/>
</dbReference>
<dbReference type="PROSITE" id="PS01124">
    <property type="entry name" value="HTH_ARAC_FAMILY_2"/>
    <property type="match status" value="1"/>
</dbReference>
<feature type="chain" id="PRO_1000068703" description="HTH-type transcriptional activator RhaS">
    <location>
        <begin position="1"/>
        <end position="278"/>
    </location>
</feature>
<feature type="domain" description="HTH araC/xylS-type" evidence="1">
    <location>
        <begin position="174"/>
        <end position="272"/>
    </location>
</feature>
<feature type="DNA-binding region" description="H-T-H motif" evidence="1">
    <location>
        <begin position="191"/>
        <end position="212"/>
    </location>
</feature>
<feature type="DNA-binding region" description="H-T-H motif" evidence="1">
    <location>
        <begin position="239"/>
        <end position="262"/>
    </location>
</feature>
<feature type="site" description="Interaction with sigma-70" evidence="1">
    <location>
        <position position="241"/>
    </location>
</feature>
<feature type="site" description="Interaction with sigma-70" evidence="1">
    <location>
        <position position="250"/>
    </location>
</feature>
<keyword id="KW-0010">Activator</keyword>
<keyword id="KW-0963">Cytoplasm</keyword>
<keyword id="KW-0238">DNA-binding</keyword>
<keyword id="KW-0677">Repeat</keyword>
<keyword id="KW-0684">Rhamnose metabolism</keyword>
<keyword id="KW-0804">Transcription</keyword>
<keyword id="KW-0805">Transcription regulation</keyword>
<sequence>MTVLHSVDFFPSGNASVAIEPRLPQADFPEHHHDFHEIVIVEHGTGIHVFNGQPYTITGGTVCFVRDHDRHLYEHTDNLCLTNVLYRSPDRFQFLAGLNQLLPQEQDGQYPSHWRVNHSVLQQVRQLVAQMEQQEGENDLPSTASREILFMQLLLLLRKSSLQENLENSASRLNLLLAWLEDHFADEVNWDAVADQFSLSLRTLHRQLKQQTGLTPQRYLNRLRLMKARHLLRHSEASVTDIAYRCGFSDSNHFSTLFRREFNWSPRDIRQGRDGFLQ</sequence>
<comment type="function">
    <text evidence="1">Activates expression of the rhaBAD and rhaT operons.</text>
</comment>
<comment type="subunit">
    <text evidence="1">Binds DNA as a dimer.</text>
</comment>
<comment type="subcellular location">
    <subcellularLocation>
        <location evidence="1">Cytoplasm</location>
    </subcellularLocation>
</comment>
<reference key="1">
    <citation type="journal article" date="2006" name="Mol. Microbiol.">
        <title>Role of pathogenicity island-associated integrases in the genome plasticity of uropathogenic Escherichia coli strain 536.</title>
        <authorList>
            <person name="Hochhut B."/>
            <person name="Wilde C."/>
            <person name="Balling G."/>
            <person name="Middendorf B."/>
            <person name="Dobrindt U."/>
            <person name="Brzuszkiewicz E."/>
            <person name="Gottschalk G."/>
            <person name="Carniel E."/>
            <person name="Hacker J."/>
        </authorList>
    </citation>
    <scope>NUCLEOTIDE SEQUENCE [LARGE SCALE GENOMIC DNA]</scope>
    <source>
        <strain>536 / UPEC</strain>
    </source>
</reference>